<accession>B6YQ92</accession>
<dbReference type="EC" id="6.1.1.15" evidence="1"/>
<dbReference type="EMBL" id="AP010656">
    <property type="protein sequence ID" value="BAG83364.1"/>
    <property type="molecule type" value="Genomic_DNA"/>
</dbReference>
<dbReference type="RefSeq" id="WP_012573125.1">
    <property type="nucleotide sequence ID" value="NC_011565.1"/>
</dbReference>
<dbReference type="SMR" id="B6YQ92"/>
<dbReference type="STRING" id="511995.CFPG_101"/>
<dbReference type="KEGG" id="aps:CFPG_101"/>
<dbReference type="eggNOG" id="COG0442">
    <property type="taxonomic scope" value="Bacteria"/>
</dbReference>
<dbReference type="HOGENOM" id="CLU_001882_4_2_10"/>
<dbReference type="OrthoDB" id="9809052at2"/>
<dbReference type="Proteomes" id="UP000000723">
    <property type="component" value="Chromosome"/>
</dbReference>
<dbReference type="GO" id="GO:0017101">
    <property type="term" value="C:aminoacyl-tRNA synthetase multienzyme complex"/>
    <property type="evidence" value="ECO:0007669"/>
    <property type="project" value="TreeGrafter"/>
</dbReference>
<dbReference type="GO" id="GO:0005737">
    <property type="term" value="C:cytoplasm"/>
    <property type="evidence" value="ECO:0007669"/>
    <property type="project" value="UniProtKB-SubCell"/>
</dbReference>
<dbReference type="GO" id="GO:0005524">
    <property type="term" value="F:ATP binding"/>
    <property type="evidence" value="ECO:0007669"/>
    <property type="project" value="UniProtKB-UniRule"/>
</dbReference>
<dbReference type="GO" id="GO:0004827">
    <property type="term" value="F:proline-tRNA ligase activity"/>
    <property type="evidence" value="ECO:0007669"/>
    <property type="project" value="UniProtKB-UniRule"/>
</dbReference>
<dbReference type="GO" id="GO:0006433">
    <property type="term" value="P:prolyl-tRNA aminoacylation"/>
    <property type="evidence" value="ECO:0007669"/>
    <property type="project" value="UniProtKB-UniRule"/>
</dbReference>
<dbReference type="CDD" id="cd00778">
    <property type="entry name" value="ProRS_core_arch_euk"/>
    <property type="match status" value="1"/>
</dbReference>
<dbReference type="FunFam" id="3.30.930.10:FF:000023">
    <property type="entry name" value="Proline--tRNA ligase"/>
    <property type="match status" value="1"/>
</dbReference>
<dbReference type="Gene3D" id="3.40.50.800">
    <property type="entry name" value="Anticodon-binding domain"/>
    <property type="match status" value="1"/>
</dbReference>
<dbReference type="Gene3D" id="3.30.930.10">
    <property type="entry name" value="Bira Bifunctional Protein, Domain 2"/>
    <property type="match status" value="1"/>
</dbReference>
<dbReference type="Gene3D" id="3.30.110.30">
    <property type="entry name" value="C-terminal domain of ProRS"/>
    <property type="match status" value="1"/>
</dbReference>
<dbReference type="HAMAP" id="MF_01571">
    <property type="entry name" value="Pro_tRNA_synth_type3"/>
    <property type="match status" value="1"/>
</dbReference>
<dbReference type="InterPro" id="IPR002314">
    <property type="entry name" value="aa-tRNA-synt_IIb"/>
</dbReference>
<dbReference type="InterPro" id="IPR006195">
    <property type="entry name" value="aa-tRNA-synth_II"/>
</dbReference>
<dbReference type="InterPro" id="IPR045864">
    <property type="entry name" value="aa-tRNA-synth_II/BPL/LPL"/>
</dbReference>
<dbReference type="InterPro" id="IPR004154">
    <property type="entry name" value="Anticodon-bd"/>
</dbReference>
<dbReference type="InterPro" id="IPR036621">
    <property type="entry name" value="Anticodon-bd_dom_sf"/>
</dbReference>
<dbReference type="InterPro" id="IPR004499">
    <property type="entry name" value="Pro-tRNA-ligase_IIa_arc-type"/>
</dbReference>
<dbReference type="InterPro" id="IPR016061">
    <property type="entry name" value="Pro-tRNA_ligase_II_C"/>
</dbReference>
<dbReference type="InterPro" id="IPR017449">
    <property type="entry name" value="Pro-tRNA_synth_II"/>
</dbReference>
<dbReference type="InterPro" id="IPR033721">
    <property type="entry name" value="ProRS_core_arch_euk"/>
</dbReference>
<dbReference type="NCBIfam" id="TIGR00408">
    <property type="entry name" value="proS_fam_I"/>
    <property type="match status" value="1"/>
</dbReference>
<dbReference type="PANTHER" id="PTHR43382:SF2">
    <property type="entry name" value="BIFUNCTIONAL GLUTAMATE_PROLINE--TRNA LIGASE"/>
    <property type="match status" value="1"/>
</dbReference>
<dbReference type="PANTHER" id="PTHR43382">
    <property type="entry name" value="PROLYL-TRNA SYNTHETASE"/>
    <property type="match status" value="1"/>
</dbReference>
<dbReference type="Pfam" id="PF03129">
    <property type="entry name" value="HGTP_anticodon"/>
    <property type="match status" value="1"/>
</dbReference>
<dbReference type="Pfam" id="PF09180">
    <property type="entry name" value="ProRS-C_1"/>
    <property type="match status" value="1"/>
</dbReference>
<dbReference type="Pfam" id="PF00587">
    <property type="entry name" value="tRNA-synt_2b"/>
    <property type="match status" value="1"/>
</dbReference>
<dbReference type="SMART" id="SM00946">
    <property type="entry name" value="ProRS-C_1"/>
    <property type="match status" value="1"/>
</dbReference>
<dbReference type="SUPFAM" id="SSF64586">
    <property type="entry name" value="C-terminal domain of ProRS"/>
    <property type="match status" value="1"/>
</dbReference>
<dbReference type="SUPFAM" id="SSF52954">
    <property type="entry name" value="Class II aaRS ABD-related"/>
    <property type="match status" value="1"/>
</dbReference>
<dbReference type="SUPFAM" id="SSF55681">
    <property type="entry name" value="Class II aaRS and biotin synthetases"/>
    <property type="match status" value="1"/>
</dbReference>
<dbReference type="PROSITE" id="PS50862">
    <property type="entry name" value="AA_TRNA_LIGASE_II"/>
    <property type="match status" value="1"/>
</dbReference>
<keyword id="KW-0030">Aminoacyl-tRNA synthetase</keyword>
<keyword id="KW-0067">ATP-binding</keyword>
<keyword id="KW-0963">Cytoplasm</keyword>
<keyword id="KW-0436">Ligase</keyword>
<keyword id="KW-0547">Nucleotide-binding</keyword>
<keyword id="KW-0648">Protein biosynthesis</keyword>
<keyword id="KW-1185">Reference proteome</keyword>
<proteinExistence type="inferred from homology"/>
<organism>
    <name type="scientific">Azobacteroides pseudotrichonymphae genomovar. CFP2</name>
    <dbReference type="NCBI Taxonomy" id="511995"/>
    <lineage>
        <taxon>Bacteria</taxon>
        <taxon>Pseudomonadati</taxon>
        <taxon>Bacteroidota</taxon>
        <taxon>Bacteroidia</taxon>
        <taxon>Bacteroidales</taxon>
        <taxon>Candidatus Azobacteroides</taxon>
    </lineage>
</organism>
<reference key="1">
    <citation type="journal article" date="2008" name="Science">
        <title>Genome of an endosymbiont coupling N2 fixation to cellulolysis within RT protist cells in termite gut.</title>
        <authorList>
            <person name="Hongoh Y."/>
            <person name="Sharma V.K."/>
            <person name="Prakash T."/>
            <person name="Noda S."/>
            <person name="Toh H."/>
            <person name="Taylor T.D."/>
            <person name="Kudo T."/>
            <person name="Sakaki Y."/>
            <person name="Toyoda A."/>
            <person name="Hattori M."/>
            <person name="Ohkuma M."/>
        </authorList>
    </citation>
    <scope>NUCLEOTIDE SEQUENCE [LARGE SCALE GENOMIC DNA]</scope>
</reference>
<name>SYP_AZOPC</name>
<gene>
    <name evidence="1" type="primary">proS</name>
    <name type="ordered locus">CFPG_101</name>
</gene>
<protein>
    <recommendedName>
        <fullName evidence="1">Proline--tRNA ligase</fullName>
        <ecNumber evidence="1">6.1.1.15</ecNumber>
    </recommendedName>
    <alternativeName>
        <fullName evidence="1">Prolyl-tRNA synthetase</fullName>
        <shortName evidence="1">ProRS</shortName>
    </alternativeName>
</protein>
<feature type="chain" id="PRO_1000215545" description="Proline--tRNA ligase">
    <location>
        <begin position="1"/>
        <end position="493"/>
    </location>
</feature>
<evidence type="ECO:0000255" key="1">
    <source>
        <dbReference type="HAMAP-Rule" id="MF_01571"/>
    </source>
</evidence>
<sequence>MVKEIKELTPKSVSSSRWYNDLVIKADLAENSAVRGCMVIKPYGYAIWEKIQRQLDEMFKETGHVNAYFPLFIPKSFLNREASHIEGFAKECAIVTHYRLKNDPIGKGIIVDSEAKLEEELIIRPTSESIIWNTYKKWIHSYRDLPILINQWANVVRWEMRTRLFLRTAEFLWQEGHTAHTSKEEAIEETLKILDIYANFVEQYMAIPVTKGVKTPCERFAGATDTYCIETLMQDGKALQAGTSHFLGQNFAKAFDVQFLNKKGKREYVWATSWGVSTRLMGALIMMHSDDNGLVLPPKLAPCQIVIIPVSKDRTSLEDINEKATNIINDFKNLDINVKYDNTDNKKPGWKFAEYELKGIPIRLTLGTRDLENGTIEVSRRDTLTKETISINNITDYANNLLNDIQQNIYQKALDYRSANTVYVDNYDEFKERIEEGGFIMAHWDGTAKTEEQIKKETKATIRCIPLNGDITPGIDMLTGMPSKQRVIFARAY</sequence>
<comment type="function">
    <text evidence="1">Catalyzes the attachment of proline to tRNA(Pro) in a two-step reaction: proline is first activated by ATP to form Pro-AMP and then transferred to the acceptor end of tRNA(Pro).</text>
</comment>
<comment type="catalytic activity">
    <reaction evidence="1">
        <text>tRNA(Pro) + L-proline + ATP = L-prolyl-tRNA(Pro) + AMP + diphosphate</text>
        <dbReference type="Rhea" id="RHEA:14305"/>
        <dbReference type="Rhea" id="RHEA-COMP:9700"/>
        <dbReference type="Rhea" id="RHEA-COMP:9702"/>
        <dbReference type="ChEBI" id="CHEBI:30616"/>
        <dbReference type="ChEBI" id="CHEBI:33019"/>
        <dbReference type="ChEBI" id="CHEBI:60039"/>
        <dbReference type="ChEBI" id="CHEBI:78442"/>
        <dbReference type="ChEBI" id="CHEBI:78532"/>
        <dbReference type="ChEBI" id="CHEBI:456215"/>
        <dbReference type="EC" id="6.1.1.15"/>
    </reaction>
</comment>
<comment type="subunit">
    <text evidence="1">Homodimer.</text>
</comment>
<comment type="subcellular location">
    <subcellularLocation>
        <location evidence="1">Cytoplasm</location>
    </subcellularLocation>
</comment>
<comment type="domain">
    <text evidence="1">Consists of three domains: the N-terminal catalytic domain, the anticodon-binding domain and the C-terminal extension.</text>
</comment>
<comment type="similarity">
    <text evidence="1">Belongs to the class-II aminoacyl-tRNA synthetase family. ProS type 3 subfamily.</text>
</comment>